<comment type="function">
    <text evidence="1">Forms part of the ribosomal stalk, playing a central role in the interaction of the ribosome with GTP-bound translation factors.</text>
</comment>
<comment type="subunit">
    <text evidence="1">Part of the ribosomal stalk of the 50S ribosomal subunit. The N-terminus interacts with L11 and the large rRNA to form the base of the stalk. The C-terminus forms an elongated spine to which L12 dimers bind in a sequential fashion forming a multimeric L10(L12)X complex.</text>
</comment>
<comment type="similarity">
    <text evidence="1">Belongs to the universal ribosomal protein uL10 family.</text>
</comment>
<keyword id="KW-0687">Ribonucleoprotein</keyword>
<keyword id="KW-0689">Ribosomal protein</keyword>
<keyword id="KW-0694">RNA-binding</keyword>
<keyword id="KW-0699">rRNA-binding</keyword>
<evidence type="ECO:0000255" key="1">
    <source>
        <dbReference type="HAMAP-Rule" id="MF_00362"/>
    </source>
</evidence>
<evidence type="ECO:0000305" key="2"/>
<reference key="1">
    <citation type="journal article" date="2005" name="Infect. Immun.">
        <title>Comparative genomic analysis of Chlamydia trachomatis oculotropic and genitotropic strains.</title>
        <authorList>
            <person name="Carlson J.H."/>
            <person name="Porcella S.F."/>
            <person name="McClarty G."/>
            <person name="Caldwell H.D."/>
        </authorList>
    </citation>
    <scope>NUCLEOTIDE SEQUENCE [LARGE SCALE GENOMIC DNA]</scope>
    <source>
        <strain>ATCC VR-571B / DSM 19440 / HAR-13</strain>
    </source>
</reference>
<dbReference type="EMBL" id="CP000051">
    <property type="protein sequence ID" value="AAX50577.1"/>
    <property type="molecule type" value="Genomic_DNA"/>
</dbReference>
<dbReference type="RefSeq" id="WP_009871664.1">
    <property type="nucleotide sequence ID" value="NC_007429.1"/>
</dbReference>
<dbReference type="SMR" id="Q3KM45"/>
<dbReference type="KEGG" id="cta:CTA_0339"/>
<dbReference type="HOGENOM" id="CLU_092227_1_2_0"/>
<dbReference type="Proteomes" id="UP000002532">
    <property type="component" value="Chromosome"/>
</dbReference>
<dbReference type="GO" id="GO:0015934">
    <property type="term" value="C:large ribosomal subunit"/>
    <property type="evidence" value="ECO:0007669"/>
    <property type="project" value="InterPro"/>
</dbReference>
<dbReference type="GO" id="GO:0070180">
    <property type="term" value="F:large ribosomal subunit rRNA binding"/>
    <property type="evidence" value="ECO:0007669"/>
    <property type="project" value="UniProtKB-UniRule"/>
</dbReference>
<dbReference type="GO" id="GO:0003735">
    <property type="term" value="F:structural constituent of ribosome"/>
    <property type="evidence" value="ECO:0007669"/>
    <property type="project" value="InterPro"/>
</dbReference>
<dbReference type="GO" id="GO:0006412">
    <property type="term" value="P:translation"/>
    <property type="evidence" value="ECO:0007669"/>
    <property type="project" value="UniProtKB-UniRule"/>
</dbReference>
<dbReference type="CDD" id="cd05797">
    <property type="entry name" value="Ribosomal_L10"/>
    <property type="match status" value="1"/>
</dbReference>
<dbReference type="FunFam" id="3.30.70.1730:FF:000018">
    <property type="entry name" value="50S ribosomal protein L10"/>
    <property type="match status" value="1"/>
</dbReference>
<dbReference type="Gene3D" id="3.30.70.1730">
    <property type="match status" value="1"/>
</dbReference>
<dbReference type="Gene3D" id="6.10.250.290">
    <property type="match status" value="1"/>
</dbReference>
<dbReference type="HAMAP" id="MF_00362">
    <property type="entry name" value="Ribosomal_uL10"/>
    <property type="match status" value="1"/>
</dbReference>
<dbReference type="InterPro" id="IPR001790">
    <property type="entry name" value="Ribosomal_uL10"/>
</dbReference>
<dbReference type="InterPro" id="IPR043141">
    <property type="entry name" value="Ribosomal_uL10-like_sf"/>
</dbReference>
<dbReference type="InterPro" id="IPR022973">
    <property type="entry name" value="Ribosomal_uL10_bac"/>
</dbReference>
<dbReference type="InterPro" id="IPR047865">
    <property type="entry name" value="Ribosomal_uL10_bac_type"/>
</dbReference>
<dbReference type="InterPro" id="IPR002363">
    <property type="entry name" value="Ribosomal_uL10_CS_bac"/>
</dbReference>
<dbReference type="NCBIfam" id="NF000955">
    <property type="entry name" value="PRK00099.1-1"/>
    <property type="match status" value="1"/>
</dbReference>
<dbReference type="PANTHER" id="PTHR11560">
    <property type="entry name" value="39S RIBOSOMAL PROTEIN L10, MITOCHONDRIAL"/>
    <property type="match status" value="1"/>
</dbReference>
<dbReference type="Pfam" id="PF00466">
    <property type="entry name" value="Ribosomal_L10"/>
    <property type="match status" value="1"/>
</dbReference>
<dbReference type="SUPFAM" id="SSF160369">
    <property type="entry name" value="Ribosomal protein L10-like"/>
    <property type="match status" value="1"/>
</dbReference>
<dbReference type="PROSITE" id="PS01109">
    <property type="entry name" value="RIBOSOMAL_L10"/>
    <property type="match status" value="1"/>
</dbReference>
<accession>Q3KM45</accession>
<organism>
    <name type="scientific">Chlamydia trachomatis serovar A (strain ATCC VR-571B / DSM 19440 / HAR-13)</name>
    <dbReference type="NCBI Taxonomy" id="315277"/>
    <lineage>
        <taxon>Bacteria</taxon>
        <taxon>Pseudomonadati</taxon>
        <taxon>Chlamydiota</taxon>
        <taxon>Chlamydiia</taxon>
        <taxon>Chlamydiales</taxon>
        <taxon>Chlamydiaceae</taxon>
        <taxon>Chlamydia/Chlamydophila group</taxon>
        <taxon>Chlamydia</taxon>
    </lineage>
</organism>
<feature type="chain" id="PRO_0000234841" description="Large ribosomal subunit protein uL10">
    <location>
        <begin position="1"/>
        <end position="172"/>
    </location>
</feature>
<sequence>MKEEKKLLLREVEEKITASQGFILLRYLGFTAAHSRSFRNNLSGVSAEFEVLKKKIFFKALETSGVEMDPEDGEGHLGVVFAYGDPVSAAKQVLDFNKQHNDSLVFLAGRIDNASLSGREVEAVAKLPSMKELRQQVVGLIAAPMSQVAGIMNSVLSGVISCVDQKAEKTQE</sequence>
<protein>
    <recommendedName>
        <fullName evidence="1">Large ribosomal subunit protein uL10</fullName>
    </recommendedName>
    <alternativeName>
        <fullName evidence="2">50S ribosomal protein L10</fullName>
    </alternativeName>
</protein>
<name>RL10_CHLTA</name>
<gene>
    <name evidence="1" type="primary">rplJ</name>
    <name type="ordered locus">CTA_0339</name>
</gene>
<proteinExistence type="inferred from homology"/>